<comment type="function">
    <text evidence="1">GTP-binding protein that is not required for the biosynthesis of Mo-molybdopterin guanine dinucleotide (Mo-MGD) cofactor, and not necessary for the formation of active molybdoenzymes using this form of molybdenum cofactor. May act as an adapter protein to achieve the efficient biosynthesis and utilization of MGD. Displays a weak intrinsic GTPase activity (By similarity).</text>
</comment>
<comment type="similarity">
    <text evidence="3">Belongs to the MobB family.</text>
</comment>
<evidence type="ECO:0000250" key="1"/>
<evidence type="ECO:0000255" key="2"/>
<evidence type="ECO:0000305" key="3"/>
<reference key="1">
    <citation type="submission" date="1997-07" db="EMBL/GenBank/DDBJ databases">
        <title>Sequence analysis of the mobA-ampS region of the Bacillus subtilis chromosome.</title>
        <authorList>
            <person name="Caldwell R.M."/>
            <person name="Ferrari E."/>
        </authorList>
    </citation>
    <scope>NUCLEOTIDE SEQUENCE [GENOMIC DNA]</scope>
    <source>
        <strain>168</strain>
    </source>
</reference>
<reference key="2">
    <citation type="journal article" date="1997" name="Nature">
        <title>The complete genome sequence of the Gram-positive bacterium Bacillus subtilis.</title>
        <authorList>
            <person name="Kunst F."/>
            <person name="Ogasawara N."/>
            <person name="Moszer I."/>
            <person name="Albertini A.M."/>
            <person name="Alloni G."/>
            <person name="Azevedo V."/>
            <person name="Bertero M.G."/>
            <person name="Bessieres P."/>
            <person name="Bolotin A."/>
            <person name="Borchert S."/>
            <person name="Borriss R."/>
            <person name="Boursier L."/>
            <person name="Brans A."/>
            <person name="Braun M."/>
            <person name="Brignell S.C."/>
            <person name="Bron S."/>
            <person name="Brouillet S."/>
            <person name="Bruschi C.V."/>
            <person name="Caldwell B."/>
            <person name="Capuano V."/>
            <person name="Carter N.M."/>
            <person name="Choi S.-K."/>
            <person name="Codani J.-J."/>
            <person name="Connerton I.F."/>
            <person name="Cummings N.J."/>
            <person name="Daniel R.A."/>
            <person name="Denizot F."/>
            <person name="Devine K.M."/>
            <person name="Duesterhoeft A."/>
            <person name="Ehrlich S.D."/>
            <person name="Emmerson P.T."/>
            <person name="Entian K.-D."/>
            <person name="Errington J."/>
            <person name="Fabret C."/>
            <person name="Ferrari E."/>
            <person name="Foulger D."/>
            <person name="Fritz C."/>
            <person name="Fujita M."/>
            <person name="Fujita Y."/>
            <person name="Fuma S."/>
            <person name="Galizzi A."/>
            <person name="Galleron N."/>
            <person name="Ghim S.-Y."/>
            <person name="Glaser P."/>
            <person name="Goffeau A."/>
            <person name="Golightly E.J."/>
            <person name="Grandi G."/>
            <person name="Guiseppi G."/>
            <person name="Guy B.J."/>
            <person name="Haga K."/>
            <person name="Haiech J."/>
            <person name="Harwood C.R."/>
            <person name="Henaut A."/>
            <person name="Hilbert H."/>
            <person name="Holsappel S."/>
            <person name="Hosono S."/>
            <person name="Hullo M.-F."/>
            <person name="Itaya M."/>
            <person name="Jones L.-M."/>
            <person name="Joris B."/>
            <person name="Karamata D."/>
            <person name="Kasahara Y."/>
            <person name="Klaerr-Blanchard M."/>
            <person name="Klein C."/>
            <person name="Kobayashi Y."/>
            <person name="Koetter P."/>
            <person name="Koningstein G."/>
            <person name="Krogh S."/>
            <person name="Kumano M."/>
            <person name="Kurita K."/>
            <person name="Lapidus A."/>
            <person name="Lardinois S."/>
            <person name="Lauber J."/>
            <person name="Lazarevic V."/>
            <person name="Lee S.-M."/>
            <person name="Levine A."/>
            <person name="Liu H."/>
            <person name="Masuda S."/>
            <person name="Mauel C."/>
            <person name="Medigue C."/>
            <person name="Medina N."/>
            <person name="Mellado R.P."/>
            <person name="Mizuno M."/>
            <person name="Moestl D."/>
            <person name="Nakai S."/>
            <person name="Noback M."/>
            <person name="Noone D."/>
            <person name="O'Reilly M."/>
            <person name="Ogawa K."/>
            <person name="Ogiwara A."/>
            <person name="Oudega B."/>
            <person name="Park S.-H."/>
            <person name="Parro V."/>
            <person name="Pohl T.M."/>
            <person name="Portetelle D."/>
            <person name="Porwollik S."/>
            <person name="Prescott A.M."/>
            <person name="Presecan E."/>
            <person name="Pujic P."/>
            <person name="Purnelle B."/>
            <person name="Rapoport G."/>
            <person name="Rey M."/>
            <person name="Reynolds S."/>
            <person name="Rieger M."/>
            <person name="Rivolta C."/>
            <person name="Rocha E."/>
            <person name="Roche B."/>
            <person name="Rose M."/>
            <person name="Sadaie Y."/>
            <person name="Sato T."/>
            <person name="Scanlan E."/>
            <person name="Schleich S."/>
            <person name="Schroeter R."/>
            <person name="Scoffone F."/>
            <person name="Sekiguchi J."/>
            <person name="Sekowska A."/>
            <person name="Seror S.J."/>
            <person name="Serror P."/>
            <person name="Shin B.-S."/>
            <person name="Soldo B."/>
            <person name="Sorokin A."/>
            <person name="Tacconi E."/>
            <person name="Takagi T."/>
            <person name="Takahashi H."/>
            <person name="Takemaru K."/>
            <person name="Takeuchi M."/>
            <person name="Tamakoshi A."/>
            <person name="Tanaka T."/>
            <person name="Terpstra P."/>
            <person name="Tognoni A."/>
            <person name="Tosato V."/>
            <person name="Uchiyama S."/>
            <person name="Vandenbol M."/>
            <person name="Vannier F."/>
            <person name="Vassarotti A."/>
            <person name="Viari A."/>
            <person name="Wambutt R."/>
            <person name="Wedler E."/>
            <person name="Wedler H."/>
            <person name="Weitzenegger T."/>
            <person name="Winters P."/>
            <person name="Wipat A."/>
            <person name="Yamamoto H."/>
            <person name="Yamane K."/>
            <person name="Yasumoto K."/>
            <person name="Yata K."/>
            <person name="Yoshida K."/>
            <person name="Yoshikawa H.-F."/>
            <person name="Zumstein E."/>
            <person name="Yoshikawa H."/>
            <person name="Danchin A."/>
        </authorList>
    </citation>
    <scope>NUCLEOTIDE SEQUENCE [LARGE SCALE GENOMIC DNA]</scope>
    <source>
        <strain>168</strain>
    </source>
</reference>
<keyword id="KW-0342">GTP-binding</keyword>
<keyword id="KW-0501">Molybdenum cofactor biosynthesis</keyword>
<keyword id="KW-0547">Nucleotide-binding</keyword>
<keyword id="KW-1185">Reference proteome</keyword>
<proteinExistence type="inferred from homology"/>
<name>MOBB_BACSU</name>
<dbReference type="EMBL" id="AF012285">
    <property type="protein sequence ID" value="AAC24903.1"/>
    <property type="molecule type" value="Genomic_DNA"/>
</dbReference>
<dbReference type="EMBL" id="AL009126">
    <property type="protein sequence ID" value="CAB13302.1"/>
    <property type="molecule type" value="Genomic_DNA"/>
</dbReference>
<dbReference type="PIR" id="D69659">
    <property type="entry name" value="D69659"/>
</dbReference>
<dbReference type="RefSeq" id="NP_389312.1">
    <property type="nucleotide sequence ID" value="NC_000964.3"/>
</dbReference>
<dbReference type="RefSeq" id="WP_003232370.1">
    <property type="nucleotide sequence ID" value="NZ_OZ025638.1"/>
</dbReference>
<dbReference type="SMR" id="O31704"/>
<dbReference type="FunCoup" id="O31704">
    <property type="interactions" value="38"/>
</dbReference>
<dbReference type="STRING" id="224308.BSU14290"/>
<dbReference type="PaxDb" id="224308-BSU14290"/>
<dbReference type="EnsemblBacteria" id="CAB13302">
    <property type="protein sequence ID" value="CAB13302"/>
    <property type="gene ID" value="BSU_14290"/>
</dbReference>
<dbReference type="GeneID" id="938790"/>
<dbReference type="KEGG" id="bsu:BSU14290"/>
<dbReference type="PATRIC" id="fig|224308.179.peg.1559"/>
<dbReference type="eggNOG" id="COG1763">
    <property type="taxonomic scope" value="Bacteria"/>
</dbReference>
<dbReference type="InParanoid" id="O31704"/>
<dbReference type="OrthoDB" id="9786803at2"/>
<dbReference type="PhylomeDB" id="O31704"/>
<dbReference type="BioCyc" id="BSUB:BSU14290-MONOMER"/>
<dbReference type="Proteomes" id="UP000001570">
    <property type="component" value="Chromosome"/>
</dbReference>
<dbReference type="GO" id="GO:0005525">
    <property type="term" value="F:GTP binding"/>
    <property type="evidence" value="ECO:0000318"/>
    <property type="project" value="GO_Central"/>
</dbReference>
<dbReference type="GO" id="GO:0006777">
    <property type="term" value="P:Mo-molybdopterin cofactor biosynthetic process"/>
    <property type="evidence" value="ECO:0007669"/>
    <property type="project" value="UniProtKB-KW"/>
</dbReference>
<dbReference type="CDD" id="cd03116">
    <property type="entry name" value="MobB"/>
    <property type="match status" value="1"/>
</dbReference>
<dbReference type="Gene3D" id="3.40.50.300">
    <property type="entry name" value="P-loop containing nucleotide triphosphate hydrolases"/>
    <property type="match status" value="1"/>
</dbReference>
<dbReference type="InterPro" id="IPR052539">
    <property type="entry name" value="MGD_biosynthesis_adapter"/>
</dbReference>
<dbReference type="InterPro" id="IPR004435">
    <property type="entry name" value="MobB_dom"/>
</dbReference>
<dbReference type="InterPro" id="IPR027417">
    <property type="entry name" value="P-loop_NTPase"/>
</dbReference>
<dbReference type="NCBIfam" id="TIGR00176">
    <property type="entry name" value="mobB"/>
    <property type="match status" value="1"/>
</dbReference>
<dbReference type="PANTHER" id="PTHR40072:SF1">
    <property type="entry name" value="MOLYBDOPTERIN-GUANINE DINUCLEOTIDE BIOSYNTHESIS ADAPTER PROTEIN"/>
    <property type="match status" value="1"/>
</dbReference>
<dbReference type="PANTHER" id="PTHR40072">
    <property type="entry name" value="MOLYBDOPTERIN-GUANINE DINUCLEOTIDE BIOSYNTHESIS ADAPTER PROTEIN-RELATED"/>
    <property type="match status" value="1"/>
</dbReference>
<dbReference type="Pfam" id="PF03205">
    <property type="entry name" value="MobB"/>
    <property type="match status" value="1"/>
</dbReference>
<dbReference type="SUPFAM" id="SSF52540">
    <property type="entry name" value="P-loop containing nucleoside triphosphate hydrolases"/>
    <property type="match status" value="1"/>
</dbReference>
<feature type="chain" id="PRO_0000096527" description="Probable molybdopterin-guanine dinucleotide biosynthesis adapter protein">
    <location>
        <begin position="1"/>
        <end position="173"/>
    </location>
</feature>
<feature type="binding site" evidence="1">
    <location>
        <begin position="17"/>
        <end position="21"/>
    </location>
    <ligand>
        <name>GTP</name>
        <dbReference type="ChEBI" id="CHEBI:37565"/>
    </ligand>
</feature>
<feature type="binding site" evidence="2">
    <location>
        <begin position="51"/>
        <end position="56"/>
    </location>
    <ligand>
        <name>GTP</name>
        <dbReference type="ChEBI" id="CHEBI:37565"/>
    </ligand>
</feature>
<feature type="binding site" evidence="2">
    <location>
        <begin position="99"/>
        <end position="101"/>
    </location>
    <ligand>
        <name>GTP</name>
        <dbReference type="ChEBI" id="CHEBI:37565"/>
    </ligand>
</feature>
<gene>
    <name type="primary">mobB</name>
    <name type="ordered locus">BSU14290</name>
</gene>
<accession>O31704</accession>
<protein>
    <recommendedName>
        <fullName>Probable molybdopterin-guanine dinucleotide biosynthesis adapter protein</fullName>
        <shortName>MGD biosynthesis adapter protein</shortName>
    </recommendedName>
    <alternativeName>
        <fullName>Molybdenum cofactor biosynthesis adapter protein</fullName>
        <shortName>Moco biosynthesis adapter protein</shortName>
    </alternativeName>
</protein>
<organism>
    <name type="scientific">Bacillus subtilis (strain 168)</name>
    <dbReference type="NCBI Taxonomy" id="224308"/>
    <lineage>
        <taxon>Bacteria</taxon>
        <taxon>Bacillati</taxon>
        <taxon>Bacillota</taxon>
        <taxon>Bacilli</taxon>
        <taxon>Bacillales</taxon>
        <taxon>Bacillaceae</taxon>
        <taxon>Bacillus</taxon>
    </lineage>
</organism>
<sequence>MALVRPFPIVQVVGFQNSGKTTFIERILEKASEQGVHLGCLKHHGHGGEPQTLTEGKDTDRYKAAGADVTAVEGAGVLQLTARRNWDLARLIELYQFLETDCLLIEGFKKAPYPKVVILSEKEDLEALQAVNIIAIIYRKKEHMTEHQGLPVFHADDPVAVDFVLSQLKGESA</sequence>